<sequence length="301" mass="34175">MGAQLSTLSRVVLSPVWFVYSLFMKLFQRSSPAITLENPDIKYPLRLIDKEIISHDTRRFRFALPSPQHILGLPIGQHIYLSTRIDGNLVIRPYTPVSSDDDKGFVDLVVKVYFKDTHPKFPAGGKMSQYLENMNIGDTIEFRGPNGLLVYQGKGKFAIRADKKSNPVVRTVKSVGMIAGGTGITPMLQVIRAVLKDPNDHTVCYLLFANQSEKDILLRPELEELRNEHSSRFKLWYTVDKAPDAWDYSQGFVNEEMIRDHLPPPGEETLILMCGPPPMIQFACLPNLERVGHPKERCFTF</sequence>
<proteinExistence type="evidence at protein level"/>
<gene>
    <name evidence="15" type="primary">Cyb5r3</name>
    <name type="synonym">Dia1</name>
</gene>
<feature type="initiator methionine" description="Removed" evidence="7 10">
    <location>
        <position position="1"/>
    </location>
</feature>
<feature type="chain" id="PRO_0000019401" description="NADH-cytochrome b5 reductase 3">
    <location>
        <begin position="2"/>
        <end position="301"/>
    </location>
</feature>
<feature type="domain" description="FAD-binding FR-type" evidence="4">
    <location>
        <begin position="40"/>
        <end position="152"/>
    </location>
</feature>
<feature type="binding site" evidence="5 16 17">
    <location>
        <position position="92"/>
    </location>
    <ligand>
        <name>FAD</name>
        <dbReference type="ChEBI" id="CHEBI:57692"/>
    </ligand>
</feature>
<feature type="binding site" evidence="5 16 17">
    <location>
        <position position="93"/>
    </location>
    <ligand>
        <name>FAD</name>
        <dbReference type="ChEBI" id="CHEBI:57692"/>
    </ligand>
</feature>
<feature type="binding site" evidence="5 16 17">
    <location>
        <position position="94"/>
    </location>
    <ligand>
        <name>FAD</name>
        <dbReference type="ChEBI" id="CHEBI:57692"/>
    </ligand>
</feature>
<feature type="binding site" evidence="5 16 17">
    <location>
        <position position="109"/>
    </location>
    <ligand>
        <name>FAD</name>
        <dbReference type="ChEBI" id="CHEBI:57692"/>
    </ligand>
</feature>
<feature type="binding site" evidence="5 16 17">
    <location>
        <position position="111"/>
    </location>
    <ligand>
        <name>FAD</name>
        <dbReference type="ChEBI" id="CHEBI:57692"/>
    </ligand>
</feature>
<feature type="binding site" evidence="5 16 17">
    <location>
        <position position="114"/>
    </location>
    <ligand>
        <name>FAD</name>
        <dbReference type="ChEBI" id="CHEBI:57692"/>
    </ligand>
</feature>
<feature type="binding site" evidence="5 16 17">
    <location>
        <position position="126"/>
    </location>
    <ligand>
        <name>FAD</name>
        <dbReference type="ChEBI" id="CHEBI:57692"/>
    </ligand>
</feature>
<feature type="binding site" evidence="5 16 17">
    <location>
        <position position="127"/>
    </location>
    <ligand>
        <name>FAD</name>
        <dbReference type="ChEBI" id="CHEBI:57692"/>
    </ligand>
</feature>
<feature type="binding site" evidence="5 16 17">
    <location>
        <position position="128"/>
    </location>
    <ligand>
        <name>FAD</name>
        <dbReference type="ChEBI" id="CHEBI:57692"/>
    </ligand>
</feature>
<feature type="binding site" evidence="5 16 17">
    <location>
        <position position="185"/>
    </location>
    <ligand>
        <name>FAD</name>
        <dbReference type="ChEBI" id="CHEBI:57692"/>
    </ligand>
</feature>
<feature type="modified residue" description="N6-acetyllysine" evidence="1">
    <location>
        <position position="42"/>
    </location>
</feature>
<feature type="modified residue" description="Phosphotyrosine" evidence="1">
    <location>
        <position position="43"/>
    </location>
</feature>
<feature type="modified residue" description="N6-acetyllysine" evidence="3">
    <location>
        <position position="50"/>
    </location>
</feature>
<feature type="modified residue" description="N6-acetyllysine" evidence="3">
    <location>
        <position position="120"/>
    </location>
</feature>
<feature type="lipid moiety-binding region" description="N-myristoyl glycine" evidence="7 10">
    <location>
        <position position="2"/>
    </location>
</feature>
<feature type="splice variant" id="VSP_009660" description="In isoform 3." evidence="11">
    <location>
        <begin position="1"/>
        <end position="23"/>
    </location>
</feature>
<feature type="splice variant" id="VSP_009661" description="In isoform 2." evidence="11">
    <original>MGAQLST</original>
    <variation>MLGPLLWTASLPV</variation>
    <location>
        <begin position="1"/>
        <end position="7"/>
    </location>
</feature>
<feature type="mutagenesis site" description="Loss of myristoylation and localization to the mitochondrial outer membrane but no loss of enzyme activity." evidence="10">
    <original>G</original>
    <variation>A</variation>
    <location>
        <position position="2"/>
    </location>
</feature>
<feature type="mutagenesis site" description="2-3 fold decrease in Km for 2 Fe(III)-[cytochrome b5]." evidence="5">
    <original>K</original>
    <variation>E</variation>
    <variation>Q</variation>
    <location>
        <position position="111"/>
    </location>
</feature>
<feature type="mutagenesis site" description="Km for 2 Fe(III)-[cytochrome b5] similiar to that of wild-type." evidence="5">
    <original>K</original>
    <variation>R</variation>
    <variation>A</variation>
    <variation>H</variation>
    <location>
        <position position="111"/>
    </location>
</feature>
<feature type="sequence conflict" description="In Ref. 6; AA sequence." evidence="12" ref="6">
    <original>A</original>
    <variation>M</variation>
    <location>
        <position position="33"/>
    </location>
</feature>
<feature type="sequence conflict" description="In Ref. 2; AAA41008." evidence="12" ref="2">
    <original>F</original>
    <variation>L</variation>
    <location>
        <position position="105"/>
    </location>
</feature>
<feature type="strand" evidence="19">
    <location>
        <begin position="43"/>
        <end position="52"/>
    </location>
</feature>
<feature type="strand" evidence="19">
    <location>
        <begin position="54"/>
        <end position="63"/>
    </location>
</feature>
<feature type="strand" evidence="19">
    <location>
        <begin position="78"/>
        <end position="85"/>
    </location>
</feature>
<feature type="strand" evidence="19">
    <location>
        <begin position="88"/>
        <end position="94"/>
    </location>
</feature>
<feature type="strand" evidence="19">
    <location>
        <begin position="104"/>
        <end position="111"/>
    </location>
</feature>
<feature type="strand" evidence="18">
    <location>
        <begin position="115"/>
        <end position="118"/>
    </location>
</feature>
<feature type="helix" evidence="19">
    <location>
        <begin position="126"/>
        <end position="132"/>
    </location>
</feature>
<feature type="strand" evidence="19">
    <location>
        <begin position="139"/>
        <end position="146"/>
    </location>
</feature>
<feature type="strand" evidence="19">
    <location>
        <begin position="148"/>
        <end position="153"/>
    </location>
</feature>
<feature type="strand" evidence="19">
    <location>
        <begin position="156"/>
        <end position="159"/>
    </location>
</feature>
<feature type="strand" evidence="19">
    <location>
        <begin position="168"/>
        <end position="171"/>
    </location>
</feature>
<feature type="strand" evidence="19">
    <location>
        <begin position="173"/>
        <end position="180"/>
    </location>
</feature>
<feature type="helix" evidence="19">
    <location>
        <begin position="181"/>
        <end position="183"/>
    </location>
</feature>
<feature type="helix" evidence="19">
    <location>
        <begin position="184"/>
        <end position="196"/>
    </location>
</feature>
<feature type="strand" evidence="19">
    <location>
        <begin position="203"/>
        <end position="212"/>
    </location>
</feature>
<feature type="helix" evidence="19">
    <location>
        <begin position="213"/>
        <end position="215"/>
    </location>
</feature>
<feature type="helix" evidence="19">
    <location>
        <begin position="219"/>
        <end position="228"/>
    </location>
</feature>
<feature type="turn" evidence="19">
    <location>
        <begin position="230"/>
        <end position="232"/>
    </location>
</feature>
<feature type="strand" evidence="19">
    <location>
        <begin position="233"/>
        <end position="241"/>
    </location>
</feature>
<feature type="strand" evidence="19">
    <location>
        <begin position="247"/>
        <end position="252"/>
    </location>
</feature>
<feature type="helix" evidence="19">
    <location>
        <begin position="255"/>
        <end position="261"/>
    </location>
</feature>
<feature type="strand" evidence="19">
    <location>
        <begin position="269"/>
        <end position="275"/>
    </location>
</feature>
<feature type="helix" evidence="19">
    <location>
        <begin position="277"/>
        <end position="282"/>
    </location>
</feature>
<feature type="helix" evidence="19">
    <location>
        <begin position="285"/>
        <end position="291"/>
    </location>
</feature>
<feature type="helix" evidence="19">
    <location>
        <begin position="295"/>
        <end position="297"/>
    </location>
</feature>
<feature type="strand" evidence="19">
    <location>
        <begin position="298"/>
        <end position="300"/>
    </location>
</feature>
<keyword id="KW-0002">3D-structure</keyword>
<keyword id="KW-0007">Acetylation</keyword>
<keyword id="KW-0024">Alternative initiation</keyword>
<keyword id="KW-0877">Alternative promoter usage</keyword>
<keyword id="KW-0152">Cholesterol biosynthesis</keyword>
<keyword id="KW-0153">Cholesterol metabolism</keyword>
<keyword id="KW-0963">Cytoplasm</keyword>
<keyword id="KW-0903">Direct protein sequencing</keyword>
<keyword id="KW-0256">Endoplasmic reticulum</keyword>
<keyword id="KW-0274">FAD</keyword>
<keyword id="KW-0285">Flavoprotein</keyword>
<keyword id="KW-0444">Lipid biosynthesis</keyword>
<keyword id="KW-0443">Lipid metabolism</keyword>
<keyword id="KW-0449">Lipoprotein</keyword>
<keyword id="KW-0472">Membrane</keyword>
<keyword id="KW-0496">Mitochondrion</keyword>
<keyword id="KW-1000">Mitochondrion outer membrane</keyword>
<keyword id="KW-0519">Myristate</keyword>
<keyword id="KW-0520">NAD</keyword>
<keyword id="KW-0560">Oxidoreductase</keyword>
<keyword id="KW-0597">Phosphoprotein</keyword>
<keyword id="KW-1185">Reference proteome</keyword>
<keyword id="KW-0752">Steroid biosynthesis</keyword>
<keyword id="KW-0753">Steroid metabolism</keyword>
<keyword id="KW-0756">Sterol biosynthesis</keyword>
<keyword id="KW-1207">Sterol metabolism</keyword>
<accession>P20070</accession>
<accession>Q64569</accession>
<accession>Q64720</accession>
<reference key="1">
    <citation type="journal article" date="1990" name="J. Biochem.">
        <title>Molecular cloning of a cDNA encoding rat NADH-cytochrome b5 reductase and the corresponding gene.</title>
        <authorList>
            <person name="Zenno S."/>
            <person name="Hattori M."/>
            <person name="Misumi Y."/>
            <person name="Yubisui T."/>
            <person name="Sakaki Y."/>
        </authorList>
    </citation>
    <scope>NUCLEOTIDE SEQUENCE [MRNA] (ISOFORM 1)</scope>
    <source>
        <tissue>Liver</tissue>
    </source>
</reference>
<reference key="2">
    <citation type="journal article" date="1988" name="Proc. Natl. Acad. Sci. U.S.A.">
        <title>Two transcripts encode rat cytochrome b5 reductase.</title>
        <authorList>
            <person name="Pietrini G."/>
            <person name="Carrera P."/>
            <person name="Borgese N."/>
        </authorList>
    </citation>
    <scope>NUCLEOTIDE SEQUENCE [MRNA] (ISOFORM 1)</scope>
    <source>
        <strain>Sprague-Dawley</strain>
        <tissue>Liver</tissue>
    </source>
</reference>
<reference key="3">
    <citation type="journal article" date="2004" name="Genome Res.">
        <title>The status, quality, and expansion of the NIH full-length cDNA project: the Mammalian Gene Collection (MGC).</title>
        <authorList>
            <consortium name="The MGC Project Team"/>
        </authorList>
    </citation>
    <scope>NUCLEOTIDE SEQUENCE [LARGE SCALE MRNA] (ISOFORM 1)</scope>
    <source>
        <tissue>Prostate</tissue>
    </source>
</reference>
<reference key="4">
    <citation type="journal article" date="1992" name="J. Cell Biol.">
        <title>A single mRNA, transcribed from an alternative, erythroid-specific, promoter, codes for two non-myristylated forms of NADH-cytochrome b5 reductase.</title>
        <authorList>
            <person name="Pietrini G."/>
            <person name="Aggujaro D."/>
            <person name="Carrera P."/>
            <person name="Malyszko J."/>
            <person name="Vitale A."/>
            <person name="Borgese N."/>
        </authorList>
    </citation>
    <scope>NUCLEOTIDE SEQUENCE [MRNA] OF 1-37 (ISOFORMS 2 AND 3)</scope>
    <scope>TISSUE SPECIFICITY</scope>
    <scope>ALTERNATIVE PROMOTER USAGE</scope>
    <scope>SUBCELLULAR LOCATION</scope>
    <source>
        <strain>Sprague-Dawley</strain>
        <strain>Wistar</strain>
        <tissue>Liver</tissue>
        <tissue>Reticulocyte</tissue>
    </source>
</reference>
<reference key="5">
    <citation type="journal article" date="1989" name="J. Biochem.">
        <title>The NH2-terminal structures of human and rat liver microsomal NADH-cytochrome b5 reductases.</title>
        <authorList>
            <person name="Murakami K."/>
            <person name="Yubisui T."/>
            <person name="Takeshita M."/>
            <person name="Miyata T."/>
        </authorList>
    </citation>
    <scope>PROTEIN SEQUENCE OF 2-25</scope>
    <scope>MYRISTOYLATION AT GLY-2</scope>
    <source>
        <tissue>Liver</tissue>
    </source>
</reference>
<reference key="6">
    <citation type="journal article" date="1996" name="Protein Expr. Purif.">
        <title>High-level expression in Escherichia coli of the soluble, catalytic domain of rat hepatic cytochrome b5 reductase.</title>
        <authorList>
            <person name="Barber M.J."/>
            <person name="Quinn G.B."/>
        </authorList>
    </citation>
    <scope>PROTEIN SEQUENCE OF 33-43</scope>
    <scope>IDENTIFICATION BY MASS SPECTROMETRY</scope>
    <scope>FUNCTION</scope>
    <scope>CATALYTIC ACTIVITY</scope>
    <scope>COFACTOR</scope>
    <scope>BIOPHYSICOCHEMICAL PROPERTIES</scope>
</reference>
<reference key="7">
    <citation type="journal article" date="1994" name="Eur. J. Biochem.">
        <title>Heterogeneity of the rat NADH-cytochrome-b5-reductase transcripts resulting from multiple alternative first exons.</title>
        <authorList>
            <person name="Mota Vieira L."/>
            <person name="Kaplan J.-C."/>
            <person name="Kahn A."/>
            <person name="Leroux A."/>
        </authorList>
    </citation>
    <scope>ALTERNATIVE SPLICING</scope>
    <scope>TISSUE SPECIFICITY</scope>
</reference>
<reference key="8">
    <citation type="journal article" date="1996" name="J. Cell Biol.">
        <title>A role for N-myristoylation in protein targeting: NADH-cytochrome b5 reductase requires myristic acid for association with outer mitochondrial but not ER membranes.</title>
        <authorList>
            <person name="Borgese N."/>
            <person name="Aggujaro D."/>
            <person name="Carrera P."/>
            <person name="Pietrini G."/>
            <person name="Bassetti M."/>
        </authorList>
    </citation>
    <scope>FUNCTION</scope>
    <scope>CATALYTIC ACTIVITY</scope>
    <scope>SUBCELLULAR LOCATION</scope>
    <scope>TOPOLOGY</scope>
    <scope>MYRISTOYLATION AT GLY-2</scope>
    <scope>MUTAGENESIS OF GLY-2</scope>
</reference>
<reference key="9">
    <citation type="journal article" date="2001" name="Biochemistry">
        <title>The structure and biochemistry of NADH-dependent cytochrome b5 reductase are now consistent.</title>
        <authorList>
            <person name="Bewley M.C."/>
            <person name="Marohnic C.C."/>
            <person name="Barber M.J."/>
        </authorList>
    </citation>
    <scope>X-RAY CRYSTALLOGRAPHY (2.00 ANGSTROMS) OF 34-301 IN COMPLEX WITH FAD AND NAD(+)</scope>
    <scope>FAD-BINDING</scope>
    <scope>COFACTOR</scope>
    <scope>FUNCTION</scope>
    <scope>CATALYTIC ACTIVITY</scope>
    <scope>BIOPHYSICOCHEMICAL PROPERTIES</scope>
    <scope>MUTAGENESIS OF LYS-111</scope>
</reference>
<comment type="function">
    <text evidence="5 9 10">Catalyzes the reduction of two molecules of cytochrome b5 using NADH as the electron donor.</text>
</comment>
<comment type="catalytic activity">
    <reaction evidence="5 9 10">
        <text>2 Fe(III)-[cytochrome b5] + NADH = 2 Fe(II)-[cytochrome b5] + NAD(+) + H(+)</text>
        <dbReference type="Rhea" id="RHEA:46680"/>
        <dbReference type="Rhea" id="RHEA-COMP:10438"/>
        <dbReference type="Rhea" id="RHEA-COMP:10439"/>
        <dbReference type="ChEBI" id="CHEBI:15378"/>
        <dbReference type="ChEBI" id="CHEBI:29033"/>
        <dbReference type="ChEBI" id="CHEBI:29034"/>
        <dbReference type="ChEBI" id="CHEBI:57540"/>
        <dbReference type="ChEBI" id="CHEBI:57945"/>
        <dbReference type="EC" id="1.6.2.2"/>
    </reaction>
    <physiologicalReaction direction="left-to-right" evidence="13">
        <dbReference type="Rhea" id="RHEA:46681"/>
    </physiologicalReaction>
</comment>
<comment type="cofactor">
    <cofactor evidence="5 9">
        <name>FAD</name>
        <dbReference type="ChEBI" id="CHEBI:57692"/>
    </cofactor>
</comment>
<comment type="biophysicochemical properties">
    <kinetics>
        <KM evidence="9">11 uM for 2 Fe(III)-[cytochrome b5]</KM>
        <KM evidence="5">10 uM for 2 Fe(III)-[cytochrome b5]</KM>
    </kinetics>
</comment>
<comment type="subunit">
    <text evidence="2 3">Component of a complex composed of cytochrome b5, NADH-cytochrome b5 reductase (CYB5R3) and MTARC2 (By similarity). Interacts with MTLN; the interaction is required to maintain cellular lipid composition and leads to stimulation of mitochondrial respiratory complex I activity (By similarity).</text>
</comment>
<comment type="subcellular location">
    <molecule>Isoform 1</molecule>
    <subcellularLocation>
        <location evidence="10">Endoplasmic reticulum membrane</location>
        <topology evidence="10">Lipid-anchor</topology>
        <orientation evidence="14">Cytoplasmic side</orientation>
    </subcellularLocation>
    <subcellularLocation>
        <location evidence="10">Mitochondrion outer membrane</location>
        <topology evidence="10">Lipid-anchor</topology>
        <orientation evidence="14">Cytoplasmic side</orientation>
    </subcellularLocation>
</comment>
<comment type="subcellular location">
    <molecule>Isoform 2</molecule>
    <subcellularLocation>
        <location evidence="6">Cytoplasm</location>
    </subcellularLocation>
</comment>
<comment type="alternative products">
    <event type="alternative promoter"/>
    <event type="alternative initiation"/>
    <isoform>
        <id>P20070-1</id>
        <name>1</name>
        <name>L-form reticulocyte reductase</name>
        <sequence type="displayed"/>
    </isoform>
    <isoform>
        <id>P20070-2</id>
        <name>2</name>
        <name>R-form reticulocyte reductase</name>
        <sequence type="described" ref="VSP_009661"/>
    </isoform>
    <isoform>
        <id>P20070-3</id>
        <name>3</name>
        <name>Soluble form</name>
        <sequence type="described" ref="VSP_009660"/>
    </isoform>
</comment>
<comment type="tissue specificity">
    <molecule>Isoform 1</molecule>
    <text evidence="6 8">Ubiquitously expressed.</text>
</comment>
<comment type="tissue specificity">
    <molecule>Isoform 3</molecule>
    <text evidence="8">Ubiquitously expressed.</text>
</comment>
<comment type="tissue specificity">
    <molecule>Isoform 2</molecule>
    <text evidence="6 8">Expressed only in erythroid tissues, reticulocytes and liver.</text>
</comment>
<comment type="PTM">
    <molecule>Isoform 1</molecule>
    <text evidence="7 10">Myristoylated.</text>
</comment>
<comment type="miscellaneous">
    <molecule>Isoform 1</molecule>
    <text>Produced by alternative promoter usage.</text>
</comment>
<comment type="miscellaneous">
    <molecule>Isoform 2</molecule>
    <text evidence="12">Produced by alternative promoter usage.</text>
</comment>
<comment type="miscellaneous">
    <molecule>Isoform 3</molecule>
    <text evidence="12">Produced by alternative initiation.</text>
</comment>
<comment type="similarity">
    <text evidence="12">Belongs to the flavoprotein pyridine nucleotide cytochrome reductase family.</text>
</comment>
<protein>
    <recommendedName>
        <fullName evidence="12">NADH-cytochrome b5 reductase 3</fullName>
        <shortName>B5R</shortName>
        <shortName>Cytochrome b5 reductase</shortName>
        <ecNumber evidence="5 9 10">1.6.2.2</ecNumber>
    </recommendedName>
    <alternativeName>
        <fullName evidence="1">Diaphorase-1</fullName>
    </alternativeName>
</protein>
<name>NB5R3_RAT</name>
<dbReference type="EC" id="1.6.2.2" evidence="5 9 10"/>
<dbReference type="EMBL" id="D00636">
    <property type="protein sequence ID" value="BAA00530.1"/>
    <property type="molecule type" value="mRNA"/>
</dbReference>
<dbReference type="EMBL" id="J03867">
    <property type="protein sequence ID" value="AAA41008.1"/>
    <property type="molecule type" value="mRNA"/>
</dbReference>
<dbReference type="EMBL" id="BC062066">
    <property type="protein sequence ID" value="AAH62066.1"/>
    <property type="molecule type" value="mRNA"/>
</dbReference>
<dbReference type="EMBL" id="X65191">
    <property type="protein sequence ID" value="CAA46308.1"/>
    <property type="molecule type" value="mRNA"/>
</dbReference>
<dbReference type="EMBL" id="X65191">
    <property type="protein sequence ID" value="CAA46309.1"/>
    <property type="molecule type" value="mRNA"/>
</dbReference>
<dbReference type="EMBL" id="X65190">
    <property type="protein sequence ID" value="CAA46307.1"/>
    <property type="molecule type" value="Genomic_DNA"/>
</dbReference>
<dbReference type="EMBL" id="X77117">
    <property type="status" value="NOT_ANNOTATED_CDS"/>
    <property type="molecule type" value="Genomic_DNA"/>
</dbReference>
<dbReference type="PIR" id="A40495">
    <property type="entry name" value="RDRTB5"/>
</dbReference>
<dbReference type="PIR" id="S23641">
    <property type="entry name" value="S23641"/>
</dbReference>
<dbReference type="RefSeq" id="NP_620232.1">
    <molecule id="P20070-1"/>
    <property type="nucleotide sequence ID" value="NM_138877.1"/>
</dbReference>
<dbReference type="RefSeq" id="XP_006242127.1">
    <molecule id="P20070-2"/>
    <property type="nucleotide sequence ID" value="XM_006242065.5"/>
</dbReference>
<dbReference type="RefSeq" id="XP_038934366.1">
    <molecule id="P20070-3"/>
    <property type="nucleotide sequence ID" value="XM_039078438.2"/>
</dbReference>
<dbReference type="PDB" id="1I7P">
    <property type="method" value="X-ray"/>
    <property type="resolution" value="2.00 A"/>
    <property type="chains" value="A=34-301"/>
</dbReference>
<dbReference type="PDB" id="1IB0">
    <property type="method" value="X-ray"/>
    <property type="resolution" value="2.30 A"/>
    <property type="chains" value="A=34-301"/>
</dbReference>
<dbReference type="PDB" id="1QX4">
    <property type="method" value="X-ray"/>
    <property type="resolution" value="1.80 A"/>
    <property type="chains" value="A/B=34-301"/>
</dbReference>
<dbReference type="PDBsum" id="1I7P"/>
<dbReference type="PDBsum" id="1IB0"/>
<dbReference type="PDBsum" id="1QX4"/>
<dbReference type="SMR" id="P20070"/>
<dbReference type="CORUM" id="P20070"/>
<dbReference type="FunCoup" id="P20070">
    <property type="interactions" value="2290"/>
</dbReference>
<dbReference type="IntAct" id="P20070">
    <property type="interactions" value="3"/>
</dbReference>
<dbReference type="STRING" id="10116.ENSRNOP00000061381"/>
<dbReference type="ChEMBL" id="CHEMBL4523194"/>
<dbReference type="GlyGen" id="P20070">
    <property type="glycosylation" value="1 site, 1 O-linked glycan (1 site)"/>
</dbReference>
<dbReference type="iPTMnet" id="P20070"/>
<dbReference type="PhosphoSitePlus" id="P20070"/>
<dbReference type="SwissPalm" id="P20070"/>
<dbReference type="jPOST" id="P20070"/>
<dbReference type="PaxDb" id="10116-ENSRNOP00000012878"/>
<dbReference type="Ensembl" id="ENSRNOT00000102247.1">
    <molecule id="P20070-1"/>
    <property type="protein sequence ID" value="ENSRNOP00000077900.1"/>
    <property type="gene ID" value="ENSRNOG00000009592.7"/>
</dbReference>
<dbReference type="Ensembl" id="ENSRNOT00000111302.1">
    <molecule id="P20070-2"/>
    <property type="protein sequence ID" value="ENSRNOP00000082175.1"/>
    <property type="gene ID" value="ENSRNOG00000009592.7"/>
</dbReference>
<dbReference type="GeneID" id="25035"/>
<dbReference type="KEGG" id="rno:25035"/>
<dbReference type="AGR" id="RGD:2502"/>
<dbReference type="CTD" id="1727"/>
<dbReference type="RGD" id="2502">
    <property type="gene designation" value="Cyb5r3"/>
</dbReference>
<dbReference type="eggNOG" id="KOG0534">
    <property type="taxonomic scope" value="Eukaryota"/>
</dbReference>
<dbReference type="GeneTree" id="ENSGT00940000153962"/>
<dbReference type="HOGENOM" id="CLU_003827_9_2_1"/>
<dbReference type="InParanoid" id="P20070"/>
<dbReference type="OMA" id="KGPEMQK"/>
<dbReference type="OrthoDB" id="432685at2759"/>
<dbReference type="PhylomeDB" id="P20070"/>
<dbReference type="TreeFam" id="TF314333"/>
<dbReference type="BRENDA" id="1.6.2.2">
    <property type="organism ID" value="5301"/>
</dbReference>
<dbReference type="Reactome" id="R-RNO-196836">
    <property type="pathway name" value="Vitamin C (ascorbate) metabolism"/>
</dbReference>
<dbReference type="Reactome" id="R-RNO-211945">
    <property type="pathway name" value="Phase I - Functionalization of compounds"/>
</dbReference>
<dbReference type="Reactome" id="R-RNO-6798695">
    <property type="pathway name" value="Neutrophil degranulation"/>
</dbReference>
<dbReference type="SABIO-RK" id="P20070"/>
<dbReference type="EvolutionaryTrace" id="P20070"/>
<dbReference type="PRO" id="PR:P20070"/>
<dbReference type="Proteomes" id="UP000002494">
    <property type="component" value="Chromosome 7"/>
</dbReference>
<dbReference type="Bgee" id="ENSRNOG00000009592">
    <property type="expression patterns" value="Expressed in lung and 19 other cell types or tissues"/>
</dbReference>
<dbReference type="GO" id="GO:0005789">
    <property type="term" value="C:endoplasmic reticulum membrane"/>
    <property type="evidence" value="ECO:0000314"/>
    <property type="project" value="UniProtKB"/>
</dbReference>
<dbReference type="GO" id="GO:0005811">
    <property type="term" value="C:lipid droplet"/>
    <property type="evidence" value="ECO:0000266"/>
    <property type="project" value="RGD"/>
</dbReference>
<dbReference type="GO" id="GO:0031966">
    <property type="term" value="C:mitochondrial membrane"/>
    <property type="evidence" value="ECO:0000266"/>
    <property type="project" value="RGD"/>
</dbReference>
<dbReference type="GO" id="GO:0005741">
    <property type="term" value="C:mitochondrial outer membrane"/>
    <property type="evidence" value="ECO:0000314"/>
    <property type="project" value="UniProtKB"/>
</dbReference>
<dbReference type="GO" id="GO:0005739">
    <property type="term" value="C:mitochondrion"/>
    <property type="evidence" value="ECO:0000318"/>
    <property type="project" value="GO_Central"/>
</dbReference>
<dbReference type="GO" id="GO:1903958">
    <property type="term" value="C:nitric-oxide synthase complex"/>
    <property type="evidence" value="ECO:0000266"/>
    <property type="project" value="RGD"/>
</dbReference>
<dbReference type="GO" id="GO:0043531">
    <property type="term" value="F:ADP binding"/>
    <property type="evidence" value="ECO:0000314"/>
    <property type="project" value="RGD"/>
</dbReference>
<dbReference type="GO" id="GO:0016208">
    <property type="term" value="F:AMP binding"/>
    <property type="evidence" value="ECO:0000314"/>
    <property type="project" value="RGD"/>
</dbReference>
<dbReference type="GO" id="GO:0004128">
    <property type="term" value="F:cytochrome-b5 reductase activity, acting on NAD(P)H"/>
    <property type="evidence" value="ECO:0000314"/>
    <property type="project" value="UniProtKB"/>
</dbReference>
<dbReference type="GO" id="GO:0071949">
    <property type="term" value="F:FAD binding"/>
    <property type="evidence" value="ECO:0000314"/>
    <property type="project" value="UniProtKB"/>
</dbReference>
<dbReference type="GO" id="GO:0050660">
    <property type="term" value="F:flavin adenine dinucleotide binding"/>
    <property type="evidence" value="ECO:0000314"/>
    <property type="project" value="RGD"/>
</dbReference>
<dbReference type="GO" id="GO:0051287">
    <property type="term" value="F:NAD binding"/>
    <property type="evidence" value="ECO:0000314"/>
    <property type="project" value="RGD"/>
</dbReference>
<dbReference type="GO" id="GO:0006695">
    <property type="term" value="P:cholesterol biosynthetic process"/>
    <property type="evidence" value="ECO:0007669"/>
    <property type="project" value="UniProtKB-KW"/>
</dbReference>
<dbReference type="GO" id="GO:0006809">
    <property type="term" value="P:nitric oxide biosynthetic process"/>
    <property type="evidence" value="ECO:0000266"/>
    <property type="project" value="RGD"/>
</dbReference>
<dbReference type="CDD" id="cd06183">
    <property type="entry name" value="cyt_b5_reduct_like"/>
    <property type="match status" value="1"/>
</dbReference>
<dbReference type="FunFam" id="2.40.30.10:FF:000021">
    <property type="entry name" value="NADH-cytochrome b5 reductase"/>
    <property type="match status" value="1"/>
</dbReference>
<dbReference type="FunFam" id="3.40.50.80:FF:000005">
    <property type="entry name" value="NADH-cytochrome b5 reductase"/>
    <property type="match status" value="1"/>
</dbReference>
<dbReference type="Gene3D" id="3.40.50.80">
    <property type="entry name" value="Nucleotide-binding domain of ferredoxin-NADP reductase (FNR) module"/>
    <property type="match status" value="1"/>
</dbReference>
<dbReference type="Gene3D" id="2.40.30.10">
    <property type="entry name" value="Translation factors"/>
    <property type="match status" value="1"/>
</dbReference>
<dbReference type="InterPro" id="IPR001834">
    <property type="entry name" value="CBR-like"/>
</dbReference>
<dbReference type="InterPro" id="IPR008333">
    <property type="entry name" value="Cbr1-like_FAD-bd_dom"/>
</dbReference>
<dbReference type="InterPro" id="IPR017927">
    <property type="entry name" value="FAD-bd_FR_type"/>
</dbReference>
<dbReference type="InterPro" id="IPR001709">
    <property type="entry name" value="Flavoprot_Pyr_Nucl_cyt_Rdtase"/>
</dbReference>
<dbReference type="InterPro" id="IPR039261">
    <property type="entry name" value="FNR_nucleotide-bd"/>
</dbReference>
<dbReference type="InterPro" id="IPR001433">
    <property type="entry name" value="OxRdtase_FAD/NAD-bd"/>
</dbReference>
<dbReference type="InterPro" id="IPR017938">
    <property type="entry name" value="Riboflavin_synthase-like_b-brl"/>
</dbReference>
<dbReference type="PANTHER" id="PTHR19370">
    <property type="entry name" value="NADH-CYTOCHROME B5 REDUCTASE"/>
    <property type="match status" value="1"/>
</dbReference>
<dbReference type="PANTHER" id="PTHR19370:SF121">
    <property type="entry name" value="NADH-CYTOCHROME B5 REDUCTASE 3"/>
    <property type="match status" value="1"/>
</dbReference>
<dbReference type="Pfam" id="PF00970">
    <property type="entry name" value="FAD_binding_6"/>
    <property type="match status" value="1"/>
</dbReference>
<dbReference type="Pfam" id="PF00175">
    <property type="entry name" value="NAD_binding_1"/>
    <property type="match status" value="1"/>
</dbReference>
<dbReference type="PRINTS" id="PR00406">
    <property type="entry name" value="CYTB5RDTASE"/>
</dbReference>
<dbReference type="PRINTS" id="PR00371">
    <property type="entry name" value="FPNCR"/>
</dbReference>
<dbReference type="SUPFAM" id="SSF52343">
    <property type="entry name" value="Ferredoxin reductase-like, C-terminal NADP-linked domain"/>
    <property type="match status" value="1"/>
</dbReference>
<dbReference type="SUPFAM" id="SSF63380">
    <property type="entry name" value="Riboflavin synthase domain-like"/>
    <property type="match status" value="1"/>
</dbReference>
<dbReference type="PROSITE" id="PS51384">
    <property type="entry name" value="FAD_FR"/>
    <property type="match status" value="1"/>
</dbReference>
<evidence type="ECO:0000250" key="1">
    <source>
        <dbReference type="UniProtKB" id="P00387"/>
    </source>
</evidence>
<evidence type="ECO:0000250" key="2">
    <source>
        <dbReference type="UniProtKB" id="P83686"/>
    </source>
</evidence>
<evidence type="ECO:0000250" key="3">
    <source>
        <dbReference type="UniProtKB" id="Q9DCN2"/>
    </source>
</evidence>
<evidence type="ECO:0000255" key="4">
    <source>
        <dbReference type="PROSITE-ProRule" id="PRU00716"/>
    </source>
</evidence>
<evidence type="ECO:0000269" key="5">
    <source>
    </source>
</evidence>
<evidence type="ECO:0000269" key="6">
    <source>
    </source>
</evidence>
<evidence type="ECO:0000269" key="7">
    <source>
    </source>
</evidence>
<evidence type="ECO:0000269" key="8">
    <source>
    </source>
</evidence>
<evidence type="ECO:0000269" key="9">
    <source>
    </source>
</evidence>
<evidence type="ECO:0000269" key="10">
    <source>
    </source>
</evidence>
<evidence type="ECO:0000303" key="11">
    <source>
    </source>
</evidence>
<evidence type="ECO:0000305" key="12"/>
<evidence type="ECO:0000305" key="13">
    <source>
    </source>
</evidence>
<evidence type="ECO:0000305" key="14">
    <source>
    </source>
</evidence>
<evidence type="ECO:0000312" key="15">
    <source>
        <dbReference type="RGD" id="2502"/>
    </source>
</evidence>
<evidence type="ECO:0007744" key="16">
    <source>
        <dbReference type="PDB" id="1I7P"/>
    </source>
</evidence>
<evidence type="ECO:0007744" key="17">
    <source>
        <dbReference type="PDB" id="1IB0"/>
    </source>
</evidence>
<evidence type="ECO:0007829" key="18">
    <source>
        <dbReference type="PDB" id="1I7P"/>
    </source>
</evidence>
<evidence type="ECO:0007829" key="19">
    <source>
        <dbReference type="PDB" id="1QX4"/>
    </source>
</evidence>
<organism>
    <name type="scientific">Rattus norvegicus</name>
    <name type="common">Rat</name>
    <dbReference type="NCBI Taxonomy" id="10116"/>
    <lineage>
        <taxon>Eukaryota</taxon>
        <taxon>Metazoa</taxon>
        <taxon>Chordata</taxon>
        <taxon>Craniata</taxon>
        <taxon>Vertebrata</taxon>
        <taxon>Euteleostomi</taxon>
        <taxon>Mammalia</taxon>
        <taxon>Eutheria</taxon>
        <taxon>Euarchontoglires</taxon>
        <taxon>Glires</taxon>
        <taxon>Rodentia</taxon>
        <taxon>Myomorpha</taxon>
        <taxon>Muroidea</taxon>
        <taxon>Muridae</taxon>
        <taxon>Murinae</taxon>
        <taxon>Rattus</taxon>
    </lineage>
</organism>